<comment type="function">
    <text evidence="1">Removes the phosphate from trehalose 6-phosphate to produce free trehalose.</text>
</comment>
<comment type="catalytic activity">
    <reaction>
        <text>alpha,alpha-trehalose 6-phosphate + H2O = alpha,alpha-trehalose + phosphate</text>
        <dbReference type="Rhea" id="RHEA:23420"/>
        <dbReference type="ChEBI" id="CHEBI:15377"/>
        <dbReference type="ChEBI" id="CHEBI:16551"/>
        <dbReference type="ChEBI" id="CHEBI:43474"/>
        <dbReference type="ChEBI" id="CHEBI:58429"/>
        <dbReference type="EC" id="3.1.3.12"/>
    </reaction>
</comment>
<comment type="cofactor">
    <cofactor evidence="1">
        <name>Mg(2+)</name>
        <dbReference type="ChEBI" id="CHEBI:18420"/>
    </cofactor>
</comment>
<comment type="pathway">
    <text>Glycan biosynthesis; trehalose biosynthesis.</text>
</comment>
<comment type="similarity">
    <text evidence="2">Belongs to the trehalose phosphatase family.</text>
</comment>
<dbReference type="EC" id="3.1.3.12"/>
<dbReference type="EMBL" id="CP000611">
    <property type="protein sequence ID" value="ABQ75196.1"/>
    <property type="molecule type" value="Genomic_DNA"/>
</dbReference>
<dbReference type="RefSeq" id="WP_003417892.1">
    <property type="nucleotide sequence ID" value="NZ_CP016972.1"/>
</dbReference>
<dbReference type="SMR" id="A5U846"/>
<dbReference type="KEGG" id="mra:MRA_3412"/>
<dbReference type="eggNOG" id="COG0561">
    <property type="taxonomic scope" value="Bacteria"/>
</dbReference>
<dbReference type="eggNOG" id="COG0637">
    <property type="taxonomic scope" value="Bacteria"/>
</dbReference>
<dbReference type="HOGENOM" id="CLU_037265_4_1_11"/>
<dbReference type="UniPathway" id="UPA00299"/>
<dbReference type="Proteomes" id="UP000001988">
    <property type="component" value="Chromosome"/>
</dbReference>
<dbReference type="GO" id="GO:0046872">
    <property type="term" value="F:metal ion binding"/>
    <property type="evidence" value="ECO:0007669"/>
    <property type="project" value="UniProtKB-KW"/>
</dbReference>
<dbReference type="GO" id="GO:0004805">
    <property type="term" value="F:trehalose-phosphatase activity"/>
    <property type="evidence" value="ECO:0007669"/>
    <property type="project" value="UniProtKB-EC"/>
</dbReference>
<dbReference type="GO" id="GO:0005992">
    <property type="term" value="P:trehalose biosynthetic process"/>
    <property type="evidence" value="ECO:0007669"/>
    <property type="project" value="UniProtKB-UniPathway"/>
</dbReference>
<dbReference type="CDD" id="cd01627">
    <property type="entry name" value="HAD_TPP"/>
    <property type="match status" value="1"/>
</dbReference>
<dbReference type="FunFam" id="3.30.70.1020:FF:000007">
    <property type="entry name" value="Trehalose 6-phosphate phosphatase"/>
    <property type="match status" value="1"/>
</dbReference>
<dbReference type="Gene3D" id="3.40.50.1000">
    <property type="entry name" value="HAD superfamily/HAD-like"/>
    <property type="match status" value="2"/>
</dbReference>
<dbReference type="Gene3D" id="3.30.70.1020">
    <property type="entry name" value="Trehalose-6-phosphate phosphatase related protein, domain 2"/>
    <property type="match status" value="1"/>
</dbReference>
<dbReference type="InterPro" id="IPR036412">
    <property type="entry name" value="HAD-like_sf"/>
</dbReference>
<dbReference type="InterPro" id="IPR006379">
    <property type="entry name" value="HAD-SF_hydro_IIB"/>
</dbReference>
<dbReference type="InterPro" id="IPR023214">
    <property type="entry name" value="HAD_sf"/>
</dbReference>
<dbReference type="InterPro" id="IPR044651">
    <property type="entry name" value="OTSB-like"/>
</dbReference>
<dbReference type="InterPro" id="IPR003337">
    <property type="entry name" value="Trehalose_PPase"/>
</dbReference>
<dbReference type="NCBIfam" id="TIGR01484">
    <property type="entry name" value="HAD-SF-IIB"/>
    <property type="match status" value="1"/>
</dbReference>
<dbReference type="NCBIfam" id="TIGR00685">
    <property type="entry name" value="T6PP"/>
    <property type="match status" value="1"/>
</dbReference>
<dbReference type="PANTHER" id="PTHR43768">
    <property type="entry name" value="TREHALOSE 6-PHOSPHATE PHOSPHATASE"/>
    <property type="match status" value="1"/>
</dbReference>
<dbReference type="PANTHER" id="PTHR43768:SF3">
    <property type="entry name" value="TREHALOSE 6-PHOSPHATE PHOSPHATASE"/>
    <property type="match status" value="1"/>
</dbReference>
<dbReference type="Pfam" id="PF02358">
    <property type="entry name" value="Trehalose_PPase"/>
    <property type="match status" value="1"/>
</dbReference>
<dbReference type="SUPFAM" id="SSF56784">
    <property type="entry name" value="HAD-like"/>
    <property type="match status" value="2"/>
</dbReference>
<sequence>MRKLGPVTIDPRRHDAVLFDTTLDATQELVRQLQEVGVGTGVFGSGLDVPIVAAGRLAVRPGRCVVVSAHSAGVTAARESGFALIIGVDRTGCRDALRRDGADTVVTDLSEVSVRTGDRRMSQLPDALQALGLADGLVARQPAVFFDFDGTLSDIVEDPDAAWLAPGALEALQKLAARCPIAVLSGRDLADVTQRVGLPGIWYAGSHGFELTAPDGTHHQNDAAAAAIPVLKQAAAELRQQLGPFPGVVVEHKRFGVAVHYRNAARDRVGEVAAAVRTAEQRHALRVTTGREVIELRPDVDWDKGKTLLWVLDHLPHSGSAPLVPIYLGDDITDEDAFDVVGPHGVPIVVRHTDDGDRATAALFALDSPARVAEFTDRLARQLREAPLRAT</sequence>
<organism>
    <name type="scientific">Mycobacterium tuberculosis (strain ATCC 25177 / H37Ra)</name>
    <dbReference type="NCBI Taxonomy" id="419947"/>
    <lineage>
        <taxon>Bacteria</taxon>
        <taxon>Bacillati</taxon>
        <taxon>Actinomycetota</taxon>
        <taxon>Actinomycetes</taxon>
        <taxon>Mycobacteriales</taxon>
        <taxon>Mycobacteriaceae</taxon>
        <taxon>Mycobacterium</taxon>
        <taxon>Mycobacterium tuberculosis complex</taxon>
    </lineage>
</organism>
<protein>
    <recommendedName>
        <fullName>Trehalose-phosphate phosphatase</fullName>
        <shortName>TPP</shortName>
        <ecNumber>3.1.3.12</ecNumber>
    </recommendedName>
    <alternativeName>
        <fullName>Trehalose-6-phosphate phosphatase</fullName>
    </alternativeName>
</protein>
<accession>A5U846</accession>
<proteinExistence type="inferred from homology"/>
<evidence type="ECO:0000250" key="1"/>
<evidence type="ECO:0000305" key="2"/>
<keyword id="KW-0378">Hydrolase</keyword>
<keyword id="KW-0460">Magnesium</keyword>
<keyword id="KW-0479">Metal-binding</keyword>
<keyword id="KW-1185">Reference proteome</keyword>
<gene>
    <name type="primary">otsB</name>
    <name type="ordered locus">MRA_3412</name>
</gene>
<reference key="1">
    <citation type="journal article" date="2008" name="PLoS ONE">
        <title>Genetic basis of virulence attenuation revealed by comparative genomic analysis of Mycobacterium tuberculosis strain H37Ra versus H37Rv.</title>
        <authorList>
            <person name="Zheng H."/>
            <person name="Lu L."/>
            <person name="Wang B."/>
            <person name="Pu S."/>
            <person name="Zhang X."/>
            <person name="Zhu G."/>
            <person name="Shi W."/>
            <person name="Zhang L."/>
            <person name="Wang H."/>
            <person name="Wang S."/>
            <person name="Zhao G."/>
            <person name="Zhang Y."/>
        </authorList>
    </citation>
    <scope>NUCLEOTIDE SEQUENCE [LARGE SCALE GENOMIC DNA]</scope>
    <source>
        <strain>ATCC 25177 / H37Ra</strain>
    </source>
</reference>
<name>OTSB_MYCTA</name>
<feature type="chain" id="PRO_0000370707" description="Trehalose-phosphate phosphatase">
    <location>
        <begin position="1"/>
        <end position="391"/>
    </location>
</feature>
<feature type="active site" description="Nucleophile" evidence="1">
    <location>
        <position position="147"/>
    </location>
</feature>
<feature type="binding site" evidence="1">
    <location>
        <begin position="147"/>
        <end position="149"/>
    </location>
    <ligand>
        <name>substrate</name>
    </ligand>
</feature>
<feature type="binding site" evidence="1">
    <location>
        <position position="147"/>
    </location>
    <ligand>
        <name>Mg(2+)</name>
        <dbReference type="ChEBI" id="CHEBI:18420"/>
    </ligand>
</feature>
<feature type="binding site" evidence="1">
    <location>
        <position position="149"/>
    </location>
    <ligand>
        <name>Mg(2+)</name>
        <dbReference type="ChEBI" id="CHEBI:18420"/>
    </ligand>
</feature>
<feature type="binding site" evidence="1">
    <location>
        <position position="330"/>
    </location>
    <ligand>
        <name>Mg(2+)</name>
        <dbReference type="ChEBI" id="CHEBI:18420"/>
    </ligand>
</feature>